<sequence>MQTGHPADGVYFGLMSGTSMDGVDGVAVRFEAGKPPAVLSEAFVGFADTLRDALFALQQPGGDEIEREALAANALAARYAVCCHELLRTAGLLPDDVRALGVHGQTVRHRPERGYTRQLNNAALLAELTRIDVIADFRSRDVAAGGQGAPLVPAFHATVFGSPDETRVVCNLGGISNITILPAGGGPQGEGHARNDTVRGHDCGPANALIDAWVERHLKQPFDDGGRFAARGKVDETLLAALLDEPYFRQNAPKSTGRDLFNADWLDAKLAGFQHLAPENVQATLTALTAATVADEIARHAGDCRAVYVCGGGARNPVLLDALATALAARGLDAAVATTAALGVPPQQVESLAFAWLAYRFNARAPGNVSTVTGAAGERVLGALYPR</sequence>
<protein>
    <recommendedName>
        <fullName evidence="1">Anhydro-N-acetylmuramic acid kinase</fullName>
        <ecNumber evidence="1">2.7.1.170</ecNumber>
    </recommendedName>
    <alternativeName>
        <fullName evidence="1">AnhMurNAc kinase</fullName>
    </alternativeName>
</protein>
<gene>
    <name evidence="1" type="primary">anmK</name>
    <name type="ordered locus">BMA2347</name>
</gene>
<organism>
    <name type="scientific">Burkholderia mallei (strain ATCC 23344)</name>
    <dbReference type="NCBI Taxonomy" id="243160"/>
    <lineage>
        <taxon>Bacteria</taxon>
        <taxon>Pseudomonadati</taxon>
        <taxon>Pseudomonadota</taxon>
        <taxon>Betaproteobacteria</taxon>
        <taxon>Burkholderiales</taxon>
        <taxon>Burkholderiaceae</taxon>
        <taxon>Burkholderia</taxon>
        <taxon>pseudomallei group</taxon>
    </lineage>
</organism>
<evidence type="ECO:0000255" key="1">
    <source>
        <dbReference type="HAMAP-Rule" id="MF_01270"/>
    </source>
</evidence>
<keyword id="KW-0067">ATP-binding</keyword>
<keyword id="KW-0119">Carbohydrate metabolism</keyword>
<keyword id="KW-0418">Kinase</keyword>
<keyword id="KW-0547">Nucleotide-binding</keyword>
<keyword id="KW-1185">Reference proteome</keyword>
<keyword id="KW-0808">Transferase</keyword>
<accession>Q62HB5</accession>
<comment type="function">
    <text evidence="1">Catalyzes the specific phosphorylation of 1,6-anhydro-N-acetylmuramic acid (anhMurNAc) with the simultaneous cleavage of the 1,6-anhydro ring, generating MurNAc-6-P. Is required for the utilization of anhMurNAc either imported from the medium or derived from its own cell wall murein, and thus plays a role in cell wall recycling.</text>
</comment>
<comment type="catalytic activity">
    <reaction evidence="1">
        <text>1,6-anhydro-N-acetyl-beta-muramate + ATP + H2O = N-acetyl-D-muramate 6-phosphate + ADP + H(+)</text>
        <dbReference type="Rhea" id="RHEA:24952"/>
        <dbReference type="ChEBI" id="CHEBI:15377"/>
        <dbReference type="ChEBI" id="CHEBI:15378"/>
        <dbReference type="ChEBI" id="CHEBI:30616"/>
        <dbReference type="ChEBI" id="CHEBI:58690"/>
        <dbReference type="ChEBI" id="CHEBI:58722"/>
        <dbReference type="ChEBI" id="CHEBI:456216"/>
        <dbReference type="EC" id="2.7.1.170"/>
    </reaction>
</comment>
<comment type="pathway">
    <text evidence="1">Amino-sugar metabolism; 1,6-anhydro-N-acetylmuramate degradation.</text>
</comment>
<comment type="pathway">
    <text evidence="1">Cell wall biogenesis; peptidoglycan recycling.</text>
</comment>
<comment type="similarity">
    <text evidence="1">Belongs to the anhydro-N-acetylmuramic acid kinase family.</text>
</comment>
<name>ANMK_BURMA</name>
<feature type="chain" id="PRO_0000249985" description="Anhydro-N-acetylmuramic acid kinase">
    <location>
        <begin position="1"/>
        <end position="387"/>
    </location>
</feature>
<feature type="binding site" evidence="1">
    <location>
        <begin position="17"/>
        <end position="24"/>
    </location>
    <ligand>
        <name>ATP</name>
        <dbReference type="ChEBI" id="CHEBI:30616"/>
    </ligand>
</feature>
<proteinExistence type="inferred from homology"/>
<dbReference type="EC" id="2.7.1.170" evidence="1"/>
<dbReference type="EMBL" id="CP000010">
    <property type="protein sequence ID" value="AAU50222.1"/>
    <property type="molecule type" value="Genomic_DNA"/>
</dbReference>
<dbReference type="RefSeq" id="WP_004194236.1">
    <property type="nucleotide sequence ID" value="NC_006348.1"/>
</dbReference>
<dbReference type="RefSeq" id="YP_103905.1">
    <property type="nucleotide sequence ID" value="NC_006348.1"/>
</dbReference>
<dbReference type="SMR" id="Q62HB5"/>
<dbReference type="KEGG" id="bma:BMA2347"/>
<dbReference type="PATRIC" id="fig|243160.12.peg.2417"/>
<dbReference type="eggNOG" id="COG2377">
    <property type="taxonomic scope" value="Bacteria"/>
</dbReference>
<dbReference type="HOGENOM" id="CLU_038782_0_0_4"/>
<dbReference type="UniPathway" id="UPA00343"/>
<dbReference type="UniPathway" id="UPA00544"/>
<dbReference type="Proteomes" id="UP000006693">
    <property type="component" value="Chromosome 1"/>
</dbReference>
<dbReference type="GO" id="GO:0005524">
    <property type="term" value="F:ATP binding"/>
    <property type="evidence" value="ECO:0007669"/>
    <property type="project" value="UniProtKB-UniRule"/>
</dbReference>
<dbReference type="GO" id="GO:0016301">
    <property type="term" value="F:kinase activity"/>
    <property type="evidence" value="ECO:0007669"/>
    <property type="project" value="UniProtKB-KW"/>
</dbReference>
<dbReference type="GO" id="GO:0016773">
    <property type="term" value="F:phosphotransferase activity, alcohol group as acceptor"/>
    <property type="evidence" value="ECO:0007669"/>
    <property type="project" value="UniProtKB-UniRule"/>
</dbReference>
<dbReference type="GO" id="GO:0097175">
    <property type="term" value="P:1,6-anhydro-N-acetyl-beta-muramic acid catabolic process"/>
    <property type="evidence" value="ECO:0007669"/>
    <property type="project" value="UniProtKB-UniRule"/>
</dbReference>
<dbReference type="GO" id="GO:0006040">
    <property type="term" value="P:amino sugar metabolic process"/>
    <property type="evidence" value="ECO:0007669"/>
    <property type="project" value="InterPro"/>
</dbReference>
<dbReference type="GO" id="GO:0009254">
    <property type="term" value="P:peptidoglycan turnover"/>
    <property type="evidence" value="ECO:0007669"/>
    <property type="project" value="UniProtKB-UniRule"/>
</dbReference>
<dbReference type="Gene3D" id="3.30.420.40">
    <property type="match status" value="2"/>
</dbReference>
<dbReference type="HAMAP" id="MF_01270">
    <property type="entry name" value="AnhMurNAc_kinase"/>
    <property type="match status" value="1"/>
</dbReference>
<dbReference type="InterPro" id="IPR005338">
    <property type="entry name" value="Anhydro_N_Ac-Mur_kinase"/>
</dbReference>
<dbReference type="InterPro" id="IPR043129">
    <property type="entry name" value="ATPase_NBD"/>
</dbReference>
<dbReference type="NCBIfam" id="NF007139">
    <property type="entry name" value="PRK09585.1-3"/>
    <property type="match status" value="1"/>
</dbReference>
<dbReference type="NCBIfam" id="NF007140">
    <property type="entry name" value="PRK09585.1-4"/>
    <property type="match status" value="1"/>
</dbReference>
<dbReference type="PANTHER" id="PTHR30605">
    <property type="entry name" value="ANHYDRO-N-ACETYLMURAMIC ACID KINASE"/>
    <property type="match status" value="1"/>
</dbReference>
<dbReference type="PANTHER" id="PTHR30605:SF0">
    <property type="entry name" value="ANHYDRO-N-ACETYLMURAMIC ACID KINASE"/>
    <property type="match status" value="1"/>
</dbReference>
<dbReference type="Pfam" id="PF03702">
    <property type="entry name" value="AnmK"/>
    <property type="match status" value="1"/>
</dbReference>
<dbReference type="SUPFAM" id="SSF53067">
    <property type="entry name" value="Actin-like ATPase domain"/>
    <property type="match status" value="1"/>
</dbReference>
<reference key="1">
    <citation type="journal article" date="2004" name="Proc. Natl. Acad. Sci. U.S.A.">
        <title>Structural flexibility in the Burkholderia mallei genome.</title>
        <authorList>
            <person name="Nierman W.C."/>
            <person name="DeShazer D."/>
            <person name="Kim H.S."/>
            <person name="Tettelin H."/>
            <person name="Nelson K.E."/>
            <person name="Feldblyum T.V."/>
            <person name="Ulrich R.L."/>
            <person name="Ronning C.M."/>
            <person name="Brinkac L.M."/>
            <person name="Daugherty S.C."/>
            <person name="Davidsen T.D."/>
            <person name="DeBoy R.T."/>
            <person name="Dimitrov G."/>
            <person name="Dodson R.J."/>
            <person name="Durkin A.S."/>
            <person name="Gwinn M.L."/>
            <person name="Haft D.H."/>
            <person name="Khouri H.M."/>
            <person name="Kolonay J.F."/>
            <person name="Madupu R."/>
            <person name="Mohammoud Y."/>
            <person name="Nelson W.C."/>
            <person name="Radune D."/>
            <person name="Romero C.M."/>
            <person name="Sarria S."/>
            <person name="Selengut J."/>
            <person name="Shamblin C."/>
            <person name="Sullivan S.A."/>
            <person name="White O."/>
            <person name="Yu Y."/>
            <person name="Zafar N."/>
            <person name="Zhou L."/>
            <person name="Fraser C.M."/>
        </authorList>
    </citation>
    <scope>NUCLEOTIDE SEQUENCE [LARGE SCALE GENOMIC DNA]</scope>
    <source>
        <strain>ATCC 23344</strain>
    </source>
</reference>